<comment type="function">
    <text evidence="1">Could be involved in insertion of integral membrane proteins into the membrane.</text>
</comment>
<comment type="subcellular location">
    <subcellularLocation>
        <location evidence="1">Cell membrane</location>
        <topology evidence="1">Peripheral membrane protein</topology>
        <orientation evidence="1">Cytoplasmic side</orientation>
    </subcellularLocation>
</comment>
<comment type="similarity">
    <text evidence="1">Belongs to the UPF0161 family.</text>
</comment>
<comment type="sequence caution" evidence="3">
    <conflict type="erroneous initiation">
        <sequence resource="EMBL-CDS" id="AAT84060"/>
    </conflict>
</comment>
<name>YIDD_CUTAK</name>
<evidence type="ECO:0000255" key="1">
    <source>
        <dbReference type="HAMAP-Rule" id="MF_00386"/>
    </source>
</evidence>
<evidence type="ECO:0000256" key="2">
    <source>
        <dbReference type="SAM" id="MobiDB-lite"/>
    </source>
</evidence>
<evidence type="ECO:0000305" key="3"/>
<feature type="chain" id="PRO_0000253142" description="Putative membrane protein insertion efficiency factor">
    <location>
        <begin position="1"/>
        <end position="138"/>
    </location>
</feature>
<feature type="region of interest" description="Disordered" evidence="2">
    <location>
        <begin position="71"/>
        <end position="138"/>
    </location>
</feature>
<feature type="compositionally biased region" description="Basic and acidic residues" evidence="2">
    <location>
        <begin position="81"/>
        <end position="113"/>
    </location>
</feature>
<feature type="compositionally biased region" description="Polar residues" evidence="2">
    <location>
        <begin position="123"/>
        <end position="138"/>
    </location>
</feature>
<organism>
    <name type="scientific">Cutibacterium acnes (strain DSM 16379 / KPA171202)</name>
    <name type="common">Propionibacterium acnes</name>
    <dbReference type="NCBI Taxonomy" id="267747"/>
    <lineage>
        <taxon>Bacteria</taxon>
        <taxon>Bacillati</taxon>
        <taxon>Actinomycetota</taxon>
        <taxon>Actinomycetes</taxon>
        <taxon>Propionibacteriales</taxon>
        <taxon>Propionibacteriaceae</taxon>
        <taxon>Cutibacterium</taxon>
    </lineage>
</organism>
<dbReference type="EMBL" id="AE017283">
    <property type="protein sequence ID" value="AAT84060.1"/>
    <property type="status" value="ALT_INIT"/>
    <property type="molecule type" value="Genomic_DNA"/>
</dbReference>
<dbReference type="EnsemblBacteria" id="AAT84060">
    <property type="protein sequence ID" value="AAT84060"/>
    <property type="gene ID" value="PPA2351"/>
</dbReference>
<dbReference type="KEGG" id="pac:PPA2351"/>
<dbReference type="eggNOG" id="COG0759">
    <property type="taxonomic scope" value="Bacteria"/>
</dbReference>
<dbReference type="HOGENOM" id="CLU_1676312_0_0_11"/>
<dbReference type="Proteomes" id="UP000000603">
    <property type="component" value="Chromosome"/>
</dbReference>
<dbReference type="GO" id="GO:0005886">
    <property type="term" value="C:plasma membrane"/>
    <property type="evidence" value="ECO:0007669"/>
    <property type="project" value="UniProtKB-SubCell"/>
</dbReference>
<dbReference type="HAMAP" id="MF_00386">
    <property type="entry name" value="UPF0161_YidD"/>
    <property type="match status" value="1"/>
</dbReference>
<dbReference type="InterPro" id="IPR002696">
    <property type="entry name" value="Membr_insert_effic_factor_YidD"/>
</dbReference>
<dbReference type="NCBIfam" id="TIGR00278">
    <property type="entry name" value="membrane protein insertion efficiency factor YidD"/>
    <property type="match status" value="1"/>
</dbReference>
<dbReference type="PANTHER" id="PTHR33383">
    <property type="entry name" value="MEMBRANE PROTEIN INSERTION EFFICIENCY FACTOR-RELATED"/>
    <property type="match status" value="1"/>
</dbReference>
<dbReference type="PANTHER" id="PTHR33383:SF1">
    <property type="entry name" value="MEMBRANE PROTEIN INSERTION EFFICIENCY FACTOR-RELATED"/>
    <property type="match status" value="1"/>
</dbReference>
<dbReference type="Pfam" id="PF01809">
    <property type="entry name" value="YidD"/>
    <property type="match status" value="1"/>
</dbReference>
<dbReference type="SMART" id="SM01234">
    <property type="entry name" value="Haemolytic"/>
    <property type="match status" value="1"/>
</dbReference>
<protein>
    <recommendedName>
        <fullName evidence="1">Putative membrane protein insertion efficiency factor</fullName>
    </recommendedName>
</protein>
<sequence>MRRFRPLTWLAIGFVKGWRALISPLYGDVCKYQPSCSTYGLRALQVHGVFRATPMIIWRILRCNPWSHGGYDPVPGTPEARQWRELHPETARSKNEPIHDLTDDNPRDHEPALRKSIPGYTDPGSTHTGTPSHTRGEN</sequence>
<proteinExistence type="inferred from homology"/>
<reference key="1">
    <citation type="journal article" date="2004" name="Science">
        <title>The complete genome sequence of Propionibacterium acnes, a commensal of human skin.</title>
        <authorList>
            <person name="Brueggemann H."/>
            <person name="Henne A."/>
            <person name="Hoster F."/>
            <person name="Liesegang H."/>
            <person name="Wiezer A."/>
            <person name="Strittmatter A."/>
            <person name="Hujer S."/>
            <person name="Duerre P."/>
            <person name="Gottschalk G."/>
        </authorList>
    </citation>
    <scope>NUCLEOTIDE SEQUENCE [LARGE SCALE GENOMIC DNA]</scope>
    <source>
        <strain>DSM 16379 / KPA171202</strain>
    </source>
</reference>
<accession>Q6A5A3</accession>
<gene>
    <name type="ordered locus">PPA2351</name>
</gene>
<keyword id="KW-1003">Cell membrane</keyword>
<keyword id="KW-0472">Membrane</keyword>